<feature type="chain" id="PRO_0000196141" description="Cuticle protein 5">
    <location>
        <begin position="1"/>
        <end position="145"/>
    </location>
</feature>
<proteinExistence type="evidence at protein level"/>
<dbReference type="GO" id="GO:0042302">
    <property type="term" value="F:structural constituent of cuticle"/>
    <property type="evidence" value="ECO:0007669"/>
    <property type="project" value="UniProtKB-KW"/>
</dbReference>
<protein>
    <recommendedName>
        <fullName>Cuticle protein 5</fullName>
    </recommendedName>
    <alternativeName>
        <fullName>BcNCP14.6</fullName>
    </alternativeName>
</protein>
<evidence type="ECO:0000269" key="1">
    <source>
    </source>
</evidence>
<reference key="1">
    <citation type="journal article" date="2000" name="Insect Biochem. Mol. Biol.">
        <title>Studies on proteins in post-ecdysial nymphal cuticle of locust, Locusta migratoria, and cockroach, Blaberus craniifer.</title>
        <authorList>
            <person name="Andersen S.O."/>
        </authorList>
    </citation>
    <scope>PROTEIN SEQUENCE</scope>
    <scope>MASS SPECTROMETRY</scope>
    <source>
        <tissue>Fifth instar larvae</tissue>
    </source>
</reference>
<comment type="developmental stage">
    <text>Expressed in post-ecdysial nymphs.</text>
</comment>
<comment type="mass spectrometry"/>
<accession>P82118</accession>
<sequence>GGYYGYPYGVVGAVHDTPEVAAAKAAHFAAVAAAGGAAAVPLYGGAYVGAHDDGQYHPGLYGDEGQYHSHYDGGYVGYAGGYDDGQYRPGLYGDEGQYHGEGYAGHYAGPIAGVPVIVNGVPADTPAVAAAKAAHFAAHAHAAHY</sequence>
<keyword id="KW-0193">Cuticle</keyword>
<keyword id="KW-0903">Direct protein sequencing</keyword>
<keyword id="KW-0677">Repeat</keyword>
<name>CUO5_BLACR</name>
<organism>
    <name type="scientific">Blaberus craniifer</name>
    <name type="common">Death's head cockroach</name>
    <dbReference type="NCBI Taxonomy" id="6982"/>
    <lineage>
        <taxon>Eukaryota</taxon>
        <taxon>Metazoa</taxon>
        <taxon>Ecdysozoa</taxon>
        <taxon>Arthropoda</taxon>
        <taxon>Hexapoda</taxon>
        <taxon>Insecta</taxon>
        <taxon>Pterygota</taxon>
        <taxon>Neoptera</taxon>
        <taxon>Polyneoptera</taxon>
        <taxon>Dictyoptera</taxon>
        <taxon>Blattodea</taxon>
        <taxon>Blaberoidea</taxon>
        <taxon>Blaberidae</taxon>
        <taxon>Blaberinae</taxon>
        <taxon>Blaberus</taxon>
    </lineage>
</organism>